<feature type="signal peptide" evidence="1">
    <location>
        <begin position="1"/>
        <end position="25"/>
    </location>
</feature>
<feature type="chain" id="PRO_0000014630" description="T-cell surface glycoprotein CD4">
    <location>
        <begin position="26"/>
        <end position="457"/>
    </location>
</feature>
<feature type="topological domain" description="Extracellular" evidence="3">
    <location>
        <begin position="26"/>
        <end position="395"/>
    </location>
</feature>
<feature type="transmembrane region" description="Helical" evidence="3">
    <location>
        <begin position="396"/>
        <end position="417"/>
    </location>
</feature>
<feature type="topological domain" description="Cytoplasmic" evidence="3">
    <location>
        <begin position="418"/>
        <end position="457"/>
    </location>
</feature>
<feature type="domain" description="Ig-like V-type">
    <location>
        <begin position="26"/>
        <end position="125"/>
    </location>
</feature>
<feature type="domain" description="Ig-like C2-type 1">
    <location>
        <begin position="126"/>
        <end position="202"/>
    </location>
</feature>
<feature type="domain" description="Ig-like C2-type 2">
    <location>
        <begin position="203"/>
        <end position="316"/>
    </location>
</feature>
<feature type="domain" description="Ig-like C2-type 3">
    <location>
        <begin position="317"/>
        <end position="373"/>
    </location>
</feature>
<feature type="modified residue" description="Phosphoserine" evidence="2">
    <location>
        <position position="432"/>
    </location>
</feature>
<feature type="modified residue" description="Phosphoserine" evidence="2">
    <location>
        <position position="439"/>
    </location>
</feature>
<feature type="modified residue" description="Phosphoserine" evidence="2">
    <location>
        <position position="455"/>
    </location>
</feature>
<feature type="lipid moiety-binding region" description="S-palmitoyl cysteine" evidence="1">
    <location>
        <position position="418"/>
    </location>
</feature>
<feature type="lipid moiety-binding region" description="S-palmitoyl cysteine" evidence="1">
    <location>
        <position position="421"/>
    </location>
</feature>
<feature type="glycosylation site" description="N-linked (GlcNAc...) asparagine" evidence="3">
    <location>
        <position position="254"/>
    </location>
</feature>
<feature type="glycosylation site" description="N-linked (GlcNAc...) asparagine" evidence="3">
    <location>
        <position position="295"/>
    </location>
</feature>
<feature type="glycosylation site" description="N-linked (GlcNAc...) asparagine" evidence="3">
    <location>
        <position position="324"/>
    </location>
</feature>
<feature type="disulfide bond" evidence="4">
    <location>
        <begin position="41"/>
        <end position="109"/>
    </location>
</feature>
<feature type="disulfide bond" evidence="4">
    <location>
        <begin position="155"/>
        <end position="184"/>
    </location>
</feature>
<feature type="disulfide bond" evidence="4">
    <location>
        <begin position="327"/>
        <end position="369"/>
    </location>
</feature>
<reference key="1">
    <citation type="submission" date="1996-08" db="EMBL/GenBank/DDBJ databases">
        <authorList>
            <person name="Tatsumi M."/>
            <person name="Hashimoto O."/>
        </authorList>
    </citation>
    <scope>NUCLEOTIDE SEQUENCE [MRNA]</scope>
</reference>
<organism>
    <name type="scientific">Saimiri sciureus</name>
    <name type="common">Common squirrel monkey</name>
    <dbReference type="NCBI Taxonomy" id="9521"/>
    <lineage>
        <taxon>Eukaryota</taxon>
        <taxon>Metazoa</taxon>
        <taxon>Chordata</taxon>
        <taxon>Craniata</taxon>
        <taxon>Vertebrata</taxon>
        <taxon>Euteleostomi</taxon>
        <taxon>Mammalia</taxon>
        <taxon>Eutheria</taxon>
        <taxon>Euarchontoglires</taxon>
        <taxon>Primates</taxon>
        <taxon>Haplorrhini</taxon>
        <taxon>Platyrrhini</taxon>
        <taxon>Cebidae</taxon>
        <taxon>Saimiriinae</taxon>
        <taxon>Saimiri</taxon>
    </lineage>
</organism>
<gene>
    <name type="primary">CD4</name>
</gene>
<accession>Q29037</accession>
<evidence type="ECO:0000250" key="1"/>
<evidence type="ECO:0000250" key="2">
    <source>
        <dbReference type="UniProtKB" id="P01730"/>
    </source>
</evidence>
<evidence type="ECO:0000255" key="3"/>
<evidence type="ECO:0000255" key="4">
    <source>
        <dbReference type="PROSITE-ProRule" id="PRU00114"/>
    </source>
</evidence>
<name>CD4_SAISC</name>
<sequence length="457" mass="50871">MNGGIPFRHLLLVLQLALLPAVTHGKTVVLGKKGEVVELPCETSLKKNVPFHWKTSDQIKILGVQNYFVTRGQSKLTDRIDSKKSSWDRGSFPLLIKDARIEDSETYICEVESKKEEVELQVFGLTANPDTHLLQGQSLTLTLESPPGSSPSVECTSPRGKRIRGRKTLSVSQLGIPDSGTWKCTVFQHLELVFEINIVVLAFQQASSTVYKKEGEQVEFSFPLAFAAETLTGSGELCWQAERASSSKSWITFNLTKQEVYVKLVTQDPKLRMGKKLPLHLTLAQALPQYAGSGNFTLALKGKTGKLHQEVNLVVMRVTQLQNNLTCEVWGPTSPKLMLSLKLENQEAKVSKREKAVWVLNPEPGAWQCLLSDSGQVLLESKFEALPTRSPPVQPMVLIVLGGVAGLLAFTGLGIFLCVRCRHRRRQAERMSQIKRLLSEKKTCQCPHRFQKTCSPI</sequence>
<comment type="function">
    <text evidence="2">Integral membrane glycoprotein that plays an essential role in the immune response and serves multiple functions in responses against both external and internal offenses. In T-cells, functions primarily as a coreceptor for MHC class II molecule:peptide complex. The antigens presented by class II peptides are derived from extracellular proteins while class I peptides are derived from cytosolic proteins. Interacts simultaneously with the T-cell receptor (TCR) and the MHC class II presented by antigen presenting cells (APCs). In turn, recruits the Src kinase LCK to the vicinity of the TCR-CD3 complex. LCK then initiates different intracellular signaling pathways by phosphorylating various substrates ultimately leading to lymphokine production, motility, adhesion and activation of T-helper cells. In other cells such as macrophages or NK cells, plays a role in differentiation/activation, cytokine expression and cell migration in a TCR/LCK-independent pathway. Participates in the development of T-helper cells in the thymus and triggers the differentiation of monocytes into functional mature macrophages.</text>
</comment>
<comment type="subunit">
    <text evidence="2">Forms disulfide-linked homodimers at the cell surface. Interacts with LCK. Interacts with PTK2/FAK1. Binds to P4HB/PDI. Interacts with IL16; this interaction induces a CD4-dependent signaling in lymphocytes. Interacts (via Ig-like V-type domain) with MHCII alpha chain (via alpha-2 domain) and beta chain (via beta-2 domain); this interaction increases the affinity of TCR for peptide-MHCII. CD4 oligomerization via Ig-like C2-type 2 and 3 domains appears to be required for stable binding to MHCII and adhesion between T cells and APCs.</text>
</comment>
<comment type="subcellular location">
    <subcellularLocation>
        <location evidence="2">Cell membrane</location>
        <topology evidence="2">Single-pass type I membrane protein</topology>
    </subcellularLocation>
    <text evidence="2">Localizes to lipid rafts.</text>
</comment>
<comment type="domain">
    <text evidence="2">The Ig-like V-type domain mediates the interaction with MHCII.</text>
</comment>
<comment type="PTM">
    <text evidence="2">Palmitoylation and association with LCK contribute to the enrichment of CD4 in lipid rafts.</text>
</comment>
<comment type="PTM">
    <text evidence="2">Phosphorylated by PKC; phosphorylation plays an important role for CD4 internalization.</text>
</comment>
<proteinExistence type="evidence at transcript level"/>
<dbReference type="EMBL" id="D86588">
    <property type="protein sequence ID" value="BAA13131.1"/>
    <property type="molecule type" value="mRNA"/>
</dbReference>
<dbReference type="SMR" id="Q29037"/>
<dbReference type="GlyCosmos" id="Q29037">
    <property type="glycosylation" value="3 sites, No reported glycans"/>
</dbReference>
<dbReference type="GO" id="GO:0009986">
    <property type="term" value="C:cell surface"/>
    <property type="evidence" value="ECO:0007669"/>
    <property type="project" value="UniProtKB-ARBA"/>
</dbReference>
<dbReference type="GO" id="GO:0005886">
    <property type="term" value="C:plasma membrane"/>
    <property type="evidence" value="ECO:0007669"/>
    <property type="project" value="UniProtKB-SubCell"/>
</dbReference>
<dbReference type="GO" id="GO:0015026">
    <property type="term" value="F:coreceptor activity"/>
    <property type="evidence" value="ECO:0007669"/>
    <property type="project" value="InterPro"/>
</dbReference>
<dbReference type="GO" id="GO:0023026">
    <property type="term" value="F:MHC class II protein complex binding"/>
    <property type="evidence" value="ECO:0000250"/>
    <property type="project" value="UniProtKB"/>
</dbReference>
<dbReference type="GO" id="GO:0002250">
    <property type="term" value="P:adaptive immune response"/>
    <property type="evidence" value="ECO:0007669"/>
    <property type="project" value="UniProtKB-KW"/>
</dbReference>
<dbReference type="GO" id="GO:0007155">
    <property type="term" value="P:cell adhesion"/>
    <property type="evidence" value="ECO:0007669"/>
    <property type="project" value="InterPro"/>
</dbReference>
<dbReference type="GO" id="GO:0030217">
    <property type="term" value="P:T cell differentiation"/>
    <property type="evidence" value="ECO:0000250"/>
    <property type="project" value="UniProtKB"/>
</dbReference>
<dbReference type="GO" id="GO:0045058">
    <property type="term" value="P:T cell selection"/>
    <property type="evidence" value="ECO:0000250"/>
    <property type="project" value="UniProtKB"/>
</dbReference>
<dbReference type="CDD" id="cd22570">
    <property type="entry name" value="CD4_CD"/>
    <property type="match status" value="1"/>
</dbReference>
<dbReference type="CDD" id="cd07695">
    <property type="entry name" value="IgV_3_CD4"/>
    <property type="match status" value="1"/>
</dbReference>
<dbReference type="FunFam" id="1.20.5.900:FF:000001">
    <property type="entry name" value="T-cell surface glycoprotein CD4"/>
    <property type="match status" value="1"/>
</dbReference>
<dbReference type="FunFam" id="2.60.40.10:FF:001105">
    <property type="entry name" value="T-cell surface glycoprotein CD4"/>
    <property type="match status" value="1"/>
</dbReference>
<dbReference type="FunFam" id="2.60.40.10:FF:001204">
    <property type="entry name" value="T-cell surface glycoprotein CD4"/>
    <property type="match status" value="1"/>
</dbReference>
<dbReference type="FunFam" id="2.60.40.10:FF:001221">
    <property type="entry name" value="T-cell surface glycoprotein CD4"/>
    <property type="match status" value="1"/>
</dbReference>
<dbReference type="FunFam" id="2.60.40.10:FF:001253">
    <property type="entry name" value="T-cell surface glycoprotein CD4"/>
    <property type="match status" value="1"/>
</dbReference>
<dbReference type="Gene3D" id="2.60.40.10">
    <property type="entry name" value="Immunoglobulins"/>
    <property type="match status" value="4"/>
</dbReference>
<dbReference type="Gene3D" id="1.20.5.900">
    <property type="entry name" value="transmembrane domain of human cd4"/>
    <property type="match status" value="1"/>
</dbReference>
<dbReference type="InterPro" id="IPR000973">
    <property type="entry name" value="CD4"/>
</dbReference>
<dbReference type="InterPro" id="IPR015274">
    <property type="entry name" value="CD4-extracel"/>
</dbReference>
<dbReference type="InterPro" id="IPR007110">
    <property type="entry name" value="Ig-like_dom"/>
</dbReference>
<dbReference type="InterPro" id="IPR036179">
    <property type="entry name" value="Ig-like_dom_sf"/>
</dbReference>
<dbReference type="InterPro" id="IPR013783">
    <property type="entry name" value="Ig-like_fold"/>
</dbReference>
<dbReference type="InterPro" id="IPR008424">
    <property type="entry name" value="Ig_C2-set"/>
</dbReference>
<dbReference type="InterPro" id="IPR003599">
    <property type="entry name" value="Ig_sub"/>
</dbReference>
<dbReference type="InterPro" id="IPR013106">
    <property type="entry name" value="Ig_V-set"/>
</dbReference>
<dbReference type="InterPro" id="IPR013151">
    <property type="entry name" value="Immunoglobulin_dom"/>
</dbReference>
<dbReference type="InterPro" id="IPR021963">
    <property type="entry name" value="Tcell_CD4_Cterm"/>
</dbReference>
<dbReference type="PANTHER" id="PTHR11422">
    <property type="entry name" value="T-CELL SURFACE GLYCOPROTEIN CD4"/>
    <property type="match status" value="1"/>
</dbReference>
<dbReference type="PANTHER" id="PTHR11422:SF0">
    <property type="entry name" value="T-CELL SURFACE GLYCOPROTEIN CD4"/>
    <property type="match status" value="1"/>
</dbReference>
<dbReference type="Pfam" id="PF05790">
    <property type="entry name" value="C2-set"/>
    <property type="match status" value="2"/>
</dbReference>
<dbReference type="Pfam" id="PF09191">
    <property type="entry name" value="CD4-extracel"/>
    <property type="match status" value="1"/>
</dbReference>
<dbReference type="Pfam" id="PF00047">
    <property type="entry name" value="ig"/>
    <property type="match status" value="1"/>
</dbReference>
<dbReference type="Pfam" id="PF12104">
    <property type="entry name" value="Tcell_CD4_C"/>
    <property type="match status" value="1"/>
</dbReference>
<dbReference type="PRINTS" id="PR00692">
    <property type="entry name" value="CD4TCANTIGEN"/>
</dbReference>
<dbReference type="SMART" id="SM00409">
    <property type="entry name" value="IG"/>
    <property type="match status" value="3"/>
</dbReference>
<dbReference type="SMART" id="SM00406">
    <property type="entry name" value="IGv"/>
    <property type="match status" value="1"/>
</dbReference>
<dbReference type="SUPFAM" id="SSF48726">
    <property type="entry name" value="Immunoglobulin"/>
    <property type="match status" value="3"/>
</dbReference>
<dbReference type="PROSITE" id="PS50835">
    <property type="entry name" value="IG_LIKE"/>
    <property type="match status" value="1"/>
</dbReference>
<protein>
    <recommendedName>
        <fullName>T-cell surface glycoprotein CD4</fullName>
    </recommendedName>
    <alternativeName>
        <fullName>T-cell surface antigen T4/Leu-3</fullName>
    </alternativeName>
    <cdAntigenName>CD4</cdAntigenName>
</protein>
<keyword id="KW-1064">Adaptive immunity</keyword>
<keyword id="KW-1003">Cell membrane</keyword>
<keyword id="KW-1015">Disulfide bond</keyword>
<keyword id="KW-0325">Glycoprotein</keyword>
<keyword id="KW-0391">Immunity</keyword>
<keyword id="KW-0393">Immunoglobulin domain</keyword>
<keyword id="KW-0449">Lipoprotein</keyword>
<keyword id="KW-0472">Membrane</keyword>
<keyword id="KW-0564">Palmitate</keyword>
<keyword id="KW-0597">Phosphoprotein</keyword>
<keyword id="KW-0677">Repeat</keyword>
<keyword id="KW-0732">Signal</keyword>
<keyword id="KW-0812">Transmembrane</keyword>
<keyword id="KW-1133">Transmembrane helix</keyword>